<name>FH12_ORYSJ</name>
<organism>
    <name type="scientific">Oryza sativa subsp. japonica</name>
    <name type="common">Rice</name>
    <dbReference type="NCBI Taxonomy" id="39947"/>
    <lineage>
        <taxon>Eukaryota</taxon>
        <taxon>Viridiplantae</taxon>
        <taxon>Streptophyta</taxon>
        <taxon>Embryophyta</taxon>
        <taxon>Tracheophyta</taxon>
        <taxon>Spermatophyta</taxon>
        <taxon>Magnoliopsida</taxon>
        <taxon>Liliopsida</taxon>
        <taxon>Poales</taxon>
        <taxon>Poaceae</taxon>
        <taxon>BOP clade</taxon>
        <taxon>Oryzoideae</taxon>
        <taxon>Oryzeae</taxon>
        <taxon>Oryzinae</taxon>
        <taxon>Oryza</taxon>
        <taxon>Oryza sativa</taxon>
    </lineage>
</organism>
<accession>Q7XWS7</accession>
<accession>Q0JEL7</accession>
<accession>Q0JEL8</accession>
<accession>Q7XWS8</accession>
<proteinExistence type="inferred from homology"/>
<sequence>MALLRRLFYRKPPDRLLEIADRVYVFDCCFSTETMEQFEYKNYLDNIVLQLREQFVDSSLMVFNFRDEGKSLVSGLFSLYGITVKDYPCQYLGCPLLPLEMVLHFLRLSERWLMLEGQQNFLLMHCEKGGWPVLAFMLAGLLLYMKQYNGEERTLVMVYKQAPKELLQMLTTLNPQPSHLRYLQYICKMDDELEWPIQPIPFTLDCVILREVPNFDGVGGCRPIVRVYGQDFLTVDKRCNVMLPPSKPRKHARRYKQQADNISVKLNVGSCVQGDVVLECLHIDDSLEDERLMFRVMFNTYFIQSHILPLNFENIDVSWDAEQRFTKKFKAEVLFSEFDGESDASIEVASDYDDEVEVGSIDVFFEAVEIFSNLDSQEGQRDAEILSITSTECSPRAELMKTAPFSHFDMEIGLGGSQKNKIDGMVLSLEKSDEKCTSAEGDIIQNNITRVVRSSSANTTDGDRDTMNSSCYGGKVDGCIVEKNNSNKEILTDSNEDSGIENVLVKEVIISETNSLKDIQMIKEVIISEVTTSKPVIEVDTIGTELSDVVHNSETITHAEANNEEEVLVTLKQNEGDNLVEECIYYGNSIMIKPEKYRKKEKSIIGSTIGVVPDSTEENSRVGLLLSVKPHLDSTGTYHDLNSPLQKIDLLNVSNTNCVEEQTKGMEASISNSYGQPSNLSSLNLQPQGSSFQANGDPTCANTSTDANESTQLELKRKSFLSLSTSSIFSPLSPRRNLLRSTSTDLSFLSPLQTKSNQHSIPCSSGRDDFASSYGPPPNIPCTSLRTSKVSSLVHPSLRPLRTVSSLSQSSFEEYLDISPPSPTFHEKHQQHFNLDPPSLIPPWQLRLAKTKENEIYPCTLSFLPLSPSNKYAHHPPFPPPPPPPHVLCTQNNSRTQISEYEQGRVEGPCPSSSYGQSILNSHDVSLSLPQKDSSCIAITNGPSSSNYVEEVPMETILNQPTLSIPLEACKDELLHCKENGGIPIPPPPPPLCDHAKKYTRIPLPPPPPEGSHGILATTSTELIDAGPQLPPLSHLEWKRCPHHPPERPHYLPGEVGGAPSPPSPPPPQRENTSVGIQGGIPPLPPPLPPTLGDYGVAPPPPSIGAGAPPPPPPPGGITGVPPPPPIGGLGGHQAPPAPPLPEGIGGVPPPPPVGGLGGPPAPPPPAGFRGGTPPPNAHGGVAPPPPPPRGHGGVGGPPTPPGAPAPPMPPGVPGGPPPPPGGRGLPAPPGGRGVVGHGLTRSLGLNSAATARRSTLKPLHWVKVTRAMHGSLWAEIQKQADANSHSEFDVKELESLFAIAPKTKGGSKSDGASKSLGSKPDKVHLIDLRRANNTEIMLTKIKMPLPDMMSAALALDDSVLDADQLENLIKFCPTKEEMELLKNYTGDKETLGKCEQFFLELMKVPRVESKFRIFAFKIQFQSQIRDVRKNLLTVSSACEELRGSEKLKVIMEKILFLGNKLNQGTPRGQALGFRLDSLLKLTDTRANNSRMTLMHFLCKGLADKSPHLLDFYEEFVNLEAASKLQLKALAEEQQAVVKGLQKVEQELAASESDGPVSEVFRKTLKEFTDASGADVRSLSALYAEVGKSADALAYYFGEDPAKCPFEQVTSTLLNFVGLFRKAHEENIKQIEADKKKAQKEAEKEANQDRTPVKSKDGLVDRSPRSPFK</sequence>
<dbReference type="EMBL" id="AL662989">
    <property type="protein sequence ID" value="CAD39926.2"/>
    <property type="status" value="ALT_SEQ"/>
    <property type="molecule type" value="Genomic_DNA"/>
</dbReference>
<dbReference type="EMBL" id="AL662989">
    <property type="protein sequence ID" value="CAD39927.2"/>
    <property type="status" value="ALT_SEQ"/>
    <property type="molecule type" value="Genomic_DNA"/>
</dbReference>
<dbReference type="EMBL" id="AP008210">
    <property type="protein sequence ID" value="BAF14219.2"/>
    <property type="status" value="ALT_SEQ"/>
    <property type="molecule type" value="Genomic_DNA"/>
</dbReference>
<dbReference type="EMBL" id="AP008210">
    <property type="protein sequence ID" value="BAF14220.2"/>
    <property type="status" value="ALT_SEQ"/>
    <property type="molecule type" value="Genomic_DNA"/>
</dbReference>
<dbReference type="EMBL" id="AP014960">
    <property type="status" value="NOT_ANNOTATED_CDS"/>
    <property type="molecule type" value="Genomic_DNA"/>
</dbReference>
<dbReference type="SMR" id="Q7XWS7"/>
<dbReference type="FunCoup" id="Q7XWS7">
    <property type="interactions" value="2"/>
</dbReference>
<dbReference type="STRING" id="39947.Q7XWS7"/>
<dbReference type="PaxDb" id="39947-Q7XWS7"/>
<dbReference type="KEGG" id="dosa:Os04g0244900"/>
<dbReference type="KEGG" id="dosa:Os04g0245000"/>
<dbReference type="eggNOG" id="KOG1922">
    <property type="taxonomic scope" value="Eukaryota"/>
</dbReference>
<dbReference type="HOGENOM" id="CLU_002558_1_0_1"/>
<dbReference type="InParanoid" id="Q7XWS7"/>
<dbReference type="Proteomes" id="UP000000763">
    <property type="component" value="Chromosome 4"/>
</dbReference>
<dbReference type="Proteomes" id="UP000059680">
    <property type="component" value="Chromosome 4"/>
</dbReference>
<dbReference type="GO" id="GO:0004721">
    <property type="term" value="F:phosphoprotein phosphatase activity"/>
    <property type="evidence" value="ECO:0007669"/>
    <property type="project" value="UniProtKB-KW"/>
</dbReference>
<dbReference type="Gene3D" id="2.60.40.1110">
    <property type="match status" value="1"/>
</dbReference>
<dbReference type="Gene3D" id="1.20.58.2220">
    <property type="entry name" value="Formin, FH2 domain"/>
    <property type="match status" value="1"/>
</dbReference>
<dbReference type="Gene3D" id="3.90.190.10">
    <property type="entry name" value="Protein tyrosine phosphatase superfamily"/>
    <property type="match status" value="1"/>
</dbReference>
<dbReference type="InterPro" id="IPR035892">
    <property type="entry name" value="C2_domain_sf"/>
</dbReference>
<dbReference type="InterPro" id="IPR015425">
    <property type="entry name" value="FH2_Formin"/>
</dbReference>
<dbReference type="InterPro" id="IPR042201">
    <property type="entry name" value="FH2_Formin_sf"/>
</dbReference>
<dbReference type="InterPro" id="IPR051144">
    <property type="entry name" value="Formin_homology_domain"/>
</dbReference>
<dbReference type="InterPro" id="IPR029021">
    <property type="entry name" value="Prot-tyrosine_phosphatase-like"/>
</dbReference>
<dbReference type="InterPro" id="IPR014020">
    <property type="entry name" value="Tensin_C2-dom"/>
</dbReference>
<dbReference type="PANTHER" id="PTHR45733">
    <property type="entry name" value="FORMIN-J"/>
    <property type="match status" value="1"/>
</dbReference>
<dbReference type="PANTHER" id="PTHR45733:SF9">
    <property type="entry name" value="FORMIN-LIKE PROTEIN 12"/>
    <property type="match status" value="1"/>
</dbReference>
<dbReference type="Pfam" id="PF02181">
    <property type="entry name" value="FH2"/>
    <property type="match status" value="1"/>
</dbReference>
<dbReference type="Pfam" id="PF10409">
    <property type="entry name" value="PTEN_C2"/>
    <property type="match status" value="1"/>
</dbReference>
<dbReference type="SMART" id="SM00498">
    <property type="entry name" value="FH2"/>
    <property type="match status" value="1"/>
</dbReference>
<dbReference type="SMART" id="SM01326">
    <property type="entry name" value="PTEN_C2"/>
    <property type="match status" value="1"/>
</dbReference>
<dbReference type="SUPFAM" id="SSF52799">
    <property type="entry name" value="(Phosphotyrosine protein) phosphatases II"/>
    <property type="match status" value="1"/>
</dbReference>
<dbReference type="SUPFAM" id="SSF49562">
    <property type="entry name" value="C2 domain (Calcium/lipid-binding domain, CaLB)"/>
    <property type="match status" value="1"/>
</dbReference>
<dbReference type="SUPFAM" id="SSF101447">
    <property type="entry name" value="Formin homology 2 domain (FH2 domain)"/>
    <property type="match status" value="1"/>
</dbReference>
<dbReference type="PROSITE" id="PS51182">
    <property type="entry name" value="C2_TENSIN"/>
    <property type="match status" value="1"/>
</dbReference>
<dbReference type="PROSITE" id="PS51444">
    <property type="entry name" value="FH2"/>
    <property type="match status" value="1"/>
</dbReference>
<dbReference type="PROSITE" id="PS51181">
    <property type="entry name" value="PPASE_TENSIN"/>
    <property type="match status" value="1"/>
</dbReference>
<reference key="1">
    <citation type="journal article" date="2002" name="Nature">
        <title>Sequence and analysis of rice chromosome 4.</title>
        <authorList>
            <person name="Feng Q."/>
            <person name="Zhang Y."/>
            <person name="Hao P."/>
            <person name="Wang S."/>
            <person name="Fu G."/>
            <person name="Huang Y."/>
            <person name="Li Y."/>
            <person name="Zhu J."/>
            <person name="Liu Y."/>
            <person name="Hu X."/>
            <person name="Jia P."/>
            <person name="Zhang Y."/>
            <person name="Zhao Q."/>
            <person name="Ying K."/>
            <person name="Yu S."/>
            <person name="Tang Y."/>
            <person name="Weng Q."/>
            <person name="Zhang L."/>
            <person name="Lu Y."/>
            <person name="Mu J."/>
            <person name="Lu Y."/>
            <person name="Zhang L.S."/>
            <person name="Yu Z."/>
            <person name="Fan D."/>
            <person name="Liu X."/>
            <person name="Lu T."/>
            <person name="Li C."/>
            <person name="Wu Y."/>
            <person name="Sun T."/>
            <person name="Lei H."/>
            <person name="Li T."/>
            <person name="Hu H."/>
            <person name="Guan J."/>
            <person name="Wu M."/>
            <person name="Zhang R."/>
            <person name="Zhou B."/>
            <person name="Chen Z."/>
            <person name="Chen L."/>
            <person name="Jin Z."/>
            <person name="Wang R."/>
            <person name="Yin H."/>
            <person name="Cai Z."/>
            <person name="Ren S."/>
            <person name="Lv G."/>
            <person name="Gu W."/>
            <person name="Zhu G."/>
            <person name="Tu Y."/>
            <person name="Jia J."/>
            <person name="Zhang Y."/>
            <person name="Chen J."/>
            <person name="Kang H."/>
            <person name="Chen X."/>
            <person name="Shao C."/>
            <person name="Sun Y."/>
            <person name="Hu Q."/>
            <person name="Zhang X."/>
            <person name="Zhang W."/>
            <person name="Wang L."/>
            <person name="Ding C."/>
            <person name="Sheng H."/>
            <person name="Gu J."/>
            <person name="Chen S."/>
            <person name="Ni L."/>
            <person name="Zhu F."/>
            <person name="Chen W."/>
            <person name="Lan L."/>
            <person name="Lai Y."/>
            <person name="Cheng Z."/>
            <person name="Gu M."/>
            <person name="Jiang J."/>
            <person name="Li J."/>
            <person name="Hong G."/>
            <person name="Xue Y."/>
            <person name="Han B."/>
        </authorList>
    </citation>
    <scope>NUCLEOTIDE SEQUENCE [LARGE SCALE GENOMIC DNA]</scope>
    <source>
        <strain>cv. Nipponbare</strain>
    </source>
</reference>
<reference key="2">
    <citation type="journal article" date="2005" name="Nature">
        <title>The map-based sequence of the rice genome.</title>
        <authorList>
            <consortium name="International rice genome sequencing project (IRGSP)"/>
        </authorList>
    </citation>
    <scope>NUCLEOTIDE SEQUENCE [LARGE SCALE GENOMIC DNA]</scope>
    <source>
        <strain>cv. Nipponbare</strain>
    </source>
</reference>
<reference key="3">
    <citation type="journal article" date="2008" name="Nucleic Acids Res.">
        <title>The rice annotation project database (RAP-DB): 2008 update.</title>
        <authorList>
            <consortium name="The rice annotation project (RAP)"/>
        </authorList>
    </citation>
    <scope>GENOME REANNOTATION</scope>
    <source>
        <strain>cv. Nipponbare</strain>
    </source>
</reference>
<reference key="4">
    <citation type="journal article" date="2013" name="Rice">
        <title>Improvement of the Oryza sativa Nipponbare reference genome using next generation sequence and optical map data.</title>
        <authorList>
            <person name="Kawahara Y."/>
            <person name="de la Bastide M."/>
            <person name="Hamilton J.P."/>
            <person name="Kanamori H."/>
            <person name="McCombie W.R."/>
            <person name="Ouyang S."/>
            <person name="Schwartz D.C."/>
            <person name="Tanaka T."/>
            <person name="Wu J."/>
            <person name="Zhou S."/>
            <person name="Childs K.L."/>
            <person name="Davidson R.M."/>
            <person name="Lin H."/>
            <person name="Quesada-Ocampo L."/>
            <person name="Vaillancourt B."/>
            <person name="Sakai H."/>
            <person name="Lee S.S."/>
            <person name="Kim J."/>
            <person name="Numa H."/>
            <person name="Itoh T."/>
            <person name="Buell C.R."/>
            <person name="Matsumoto T."/>
        </authorList>
    </citation>
    <scope>GENOME REANNOTATION</scope>
    <source>
        <strain>cv. Nipponbare</strain>
    </source>
</reference>
<reference key="5">
    <citation type="journal article" date="2004" name="BMC Genomics">
        <title>Formin homology 2 domains occur in multiple contexts in angiosperms.</title>
        <authorList>
            <person name="Cvrckova F."/>
            <person name="Novotny M."/>
            <person name="Pickova D."/>
            <person name="Zarsky V."/>
        </authorList>
    </citation>
    <scope>GENE FAMILY</scope>
    <scope>NOMENCLATURE</scope>
</reference>
<feature type="chain" id="PRO_0000319012" description="Formin-like protein 12">
    <location>
        <begin position="1"/>
        <end position="1669"/>
    </location>
</feature>
<feature type="domain" description="Phosphatase tensin-type" evidence="2">
    <location>
        <begin position="5"/>
        <end position="193"/>
    </location>
</feature>
<feature type="domain" description="C2 tensin-type" evidence="1">
    <location>
        <begin position="199"/>
        <end position="338"/>
    </location>
</feature>
<feature type="domain" description="FH2" evidence="3">
    <location>
        <begin position="1247"/>
        <end position="1646"/>
    </location>
</feature>
<feature type="region of interest" description="Disordered" evidence="4">
    <location>
        <begin position="688"/>
        <end position="709"/>
    </location>
</feature>
<feature type="region of interest" description="Disordered" evidence="4">
    <location>
        <begin position="1025"/>
        <end position="1240"/>
    </location>
</feature>
<feature type="region of interest" description="Disordered" evidence="4">
    <location>
        <begin position="1631"/>
        <end position="1669"/>
    </location>
</feature>
<feature type="compositionally biased region" description="Basic and acidic residues" evidence="4">
    <location>
        <begin position="1036"/>
        <end position="1050"/>
    </location>
</feature>
<feature type="compositionally biased region" description="Pro residues" evidence="4">
    <location>
        <begin position="1060"/>
        <end position="1069"/>
    </location>
</feature>
<feature type="compositionally biased region" description="Pro residues" evidence="4">
    <location>
        <begin position="1098"/>
        <end position="1127"/>
    </location>
</feature>
<feature type="compositionally biased region" description="Pro residues" evidence="4">
    <location>
        <begin position="1136"/>
        <end position="1190"/>
    </location>
</feature>
<feature type="compositionally biased region" description="Pro residues" evidence="4">
    <location>
        <begin position="1198"/>
        <end position="1230"/>
    </location>
</feature>
<feature type="active site" description="Phosphocysteine intermediate" evidence="2">
    <location>
        <position position="126"/>
    </location>
</feature>
<evidence type="ECO:0000255" key="1">
    <source>
        <dbReference type="PROSITE-ProRule" id="PRU00589"/>
    </source>
</evidence>
<evidence type="ECO:0000255" key="2">
    <source>
        <dbReference type="PROSITE-ProRule" id="PRU00590"/>
    </source>
</evidence>
<evidence type="ECO:0000255" key="3">
    <source>
        <dbReference type="PROSITE-ProRule" id="PRU00774"/>
    </source>
</evidence>
<evidence type="ECO:0000256" key="4">
    <source>
        <dbReference type="SAM" id="MobiDB-lite"/>
    </source>
</evidence>
<evidence type="ECO:0000305" key="5"/>
<gene>
    <name type="primary">FH12</name>
    <name type="ordered locus">Os04g0244900/Os04g0245000</name>
    <name type="ordered locus">LOC_Os04g17120/LOC_Os04g17130</name>
    <name type="ORF">OSJNBa0091C12.4</name>
    <name type="ORF">OSJNBa0091C12.5</name>
</gene>
<comment type="similarity">
    <text evidence="5">Belongs to the formin-like family. Class-II subfamily.</text>
</comment>
<comment type="sequence caution" evidence="5">
    <conflict type="erroneous gene model prediction">
        <sequence resource="EMBL-CDS" id="BAF14219"/>
    </conflict>
    <text>Was originally thought to correspond to two different genes Os04g0244900 and Os04g0245000.</text>
</comment>
<comment type="sequence caution" evidence="5">
    <conflict type="erroneous gene model prediction">
        <sequence resource="EMBL-CDS" id="BAF14220"/>
    </conflict>
    <text>Was originally thought to correspond to two different genes Os04g0244900 and Os04g0245000.</text>
</comment>
<comment type="sequence caution" evidence="5">
    <conflict type="erroneous gene model prediction">
        <sequence resource="EMBL-CDS" id="CAD39926"/>
    </conflict>
    <text>Was originally thought to correspond to two different genes Os04g0244900 and Os04g0245000.</text>
</comment>
<comment type="sequence caution" evidence="5">
    <conflict type="erroneous gene model prediction">
        <sequence resource="EMBL-CDS" id="CAD39927"/>
    </conflict>
    <text>Was originally thought to correspond to two different genes Os04g0244900 and Os04g0245000.</text>
</comment>
<keyword id="KW-0378">Hydrolase</keyword>
<keyword id="KW-0904">Protein phosphatase</keyword>
<keyword id="KW-1185">Reference proteome</keyword>
<protein>
    <recommendedName>
        <fullName>Formin-like protein 12</fullName>
    </recommendedName>
    <alternativeName>
        <fullName>OsFH12</fullName>
    </alternativeName>
</protein>